<reference key="1">
    <citation type="journal article" date="2003" name="Proc. Natl. Acad. Sci. U.S.A.">
        <title>The complete genome sequence of Chromobacterium violaceum reveals remarkable and exploitable bacterial adaptability.</title>
        <authorList>
            <person name="Vasconcelos A.T.R."/>
            <person name="de Almeida D.F."/>
            <person name="Hungria M."/>
            <person name="Guimaraes C.T."/>
            <person name="Antonio R.V."/>
            <person name="Almeida F.C."/>
            <person name="de Almeida L.G.P."/>
            <person name="de Almeida R."/>
            <person name="Alves-Gomes J.A."/>
            <person name="Andrade E.M."/>
            <person name="Araripe J."/>
            <person name="de Araujo M.F.F."/>
            <person name="Astolfi-Filho S."/>
            <person name="Azevedo V."/>
            <person name="Baptista A.J."/>
            <person name="Bataus L.A.M."/>
            <person name="Batista J.S."/>
            <person name="Belo A."/>
            <person name="van den Berg C."/>
            <person name="Bogo M."/>
            <person name="Bonatto S."/>
            <person name="Bordignon J."/>
            <person name="Brigido M.M."/>
            <person name="Brito C.A."/>
            <person name="Brocchi M."/>
            <person name="Burity H.A."/>
            <person name="Camargo A.A."/>
            <person name="Cardoso D.D.P."/>
            <person name="Carneiro N.P."/>
            <person name="Carraro D.M."/>
            <person name="Carvalho C.M.B."/>
            <person name="Cascardo J.C.M."/>
            <person name="Cavada B.S."/>
            <person name="Chueire L.M.O."/>
            <person name="Creczynski-Pasa T.B."/>
            <person name="Cunha-Junior N.C."/>
            <person name="Fagundes N."/>
            <person name="Falcao C.L."/>
            <person name="Fantinatti F."/>
            <person name="Farias I.P."/>
            <person name="Felipe M.S.S."/>
            <person name="Ferrari L.P."/>
            <person name="Ferro J.A."/>
            <person name="Ferro M.I.T."/>
            <person name="Franco G.R."/>
            <person name="Freitas N.S.A."/>
            <person name="Furlan L.R."/>
            <person name="Gazzinelli R.T."/>
            <person name="Gomes E.A."/>
            <person name="Goncalves P.R."/>
            <person name="Grangeiro T.B."/>
            <person name="Grattapaglia D."/>
            <person name="Grisard E.C."/>
            <person name="Hanna E.S."/>
            <person name="Jardim S.N."/>
            <person name="Laurino J."/>
            <person name="Leoi L.C.T."/>
            <person name="Lima L.F.A."/>
            <person name="Loureiro M.F."/>
            <person name="Lyra M.C.C.P."/>
            <person name="Madeira H.M.F."/>
            <person name="Manfio G.P."/>
            <person name="Maranhao A.Q."/>
            <person name="Martins W.S."/>
            <person name="di Mauro S.M.Z."/>
            <person name="de Medeiros S.R.B."/>
            <person name="Meissner R.V."/>
            <person name="Moreira M.A.M."/>
            <person name="Nascimento F.F."/>
            <person name="Nicolas M.F."/>
            <person name="Oliveira J.G."/>
            <person name="Oliveira S.C."/>
            <person name="Paixao R.F.C."/>
            <person name="Parente J.A."/>
            <person name="Pedrosa F.O."/>
            <person name="Pena S.D.J."/>
            <person name="Pereira J.O."/>
            <person name="Pereira M."/>
            <person name="Pinto L.S.R.C."/>
            <person name="Pinto L.S."/>
            <person name="Porto J.I.R."/>
            <person name="Potrich D.P."/>
            <person name="Ramalho-Neto C.E."/>
            <person name="Reis A.M.M."/>
            <person name="Rigo L.U."/>
            <person name="Rondinelli E."/>
            <person name="Santos E.B.P."/>
            <person name="Santos F.R."/>
            <person name="Schneider M.P.C."/>
            <person name="Seuanez H.N."/>
            <person name="Silva A.M.R."/>
            <person name="da Silva A.L.C."/>
            <person name="Silva D.W."/>
            <person name="Silva R."/>
            <person name="Simoes I.C."/>
            <person name="Simon D."/>
            <person name="Soares C.M.A."/>
            <person name="Soares R.B.A."/>
            <person name="Souza E.M."/>
            <person name="Souza K.R.L."/>
            <person name="Souza R.C."/>
            <person name="Steffens M.B.R."/>
            <person name="Steindel M."/>
            <person name="Teixeira S.R."/>
            <person name="Urmenyi T."/>
            <person name="Vettore A."/>
            <person name="Wassem R."/>
            <person name="Zaha A."/>
            <person name="Simpson A.J.G."/>
        </authorList>
    </citation>
    <scope>NUCLEOTIDE SEQUENCE [LARGE SCALE GENOMIC DNA]</scope>
    <source>
        <strain>ATCC 12472 / DSM 30191 / JCM 1249 / CCUG 213 / NBRC 12614 / NCIMB 9131 / NCTC 9757 / MK</strain>
    </source>
</reference>
<sequence length="219" mass="23677">MLTQDQLKLAVAKKALEFVPEDAIIGVGTGSTVNLFIEELAGIKGRIKGAVSSSEASTARLKAHHIQVFDLNEVEKLSVYIDGADEINHHLHMIKGGGAALTREKIVAGVADEFICIADEKKYVTMLGAFPLPIEVIPMARSYVARELVKLGGHPELRQGVTTDNGNVILDVHGLQIMKPVELEETINHIAGVVTCGLFARRRADVLLLGKQDGVEVLR</sequence>
<keyword id="KW-0413">Isomerase</keyword>
<keyword id="KW-1185">Reference proteome</keyword>
<name>RPIA_CHRVO</name>
<gene>
    <name evidence="1" type="primary">rpiA</name>
    <name type="ordered locus">CV_1260</name>
</gene>
<organism>
    <name type="scientific">Chromobacterium violaceum (strain ATCC 12472 / DSM 30191 / JCM 1249 / CCUG 213 / NBRC 12614 / NCIMB 9131 / NCTC 9757 / MK)</name>
    <dbReference type="NCBI Taxonomy" id="243365"/>
    <lineage>
        <taxon>Bacteria</taxon>
        <taxon>Pseudomonadati</taxon>
        <taxon>Pseudomonadota</taxon>
        <taxon>Betaproteobacteria</taxon>
        <taxon>Neisseriales</taxon>
        <taxon>Chromobacteriaceae</taxon>
        <taxon>Chromobacterium</taxon>
    </lineage>
</organism>
<dbReference type="EC" id="5.3.1.6" evidence="1"/>
<dbReference type="EMBL" id="AE016825">
    <property type="protein sequence ID" value="AAQ58935.1"/>
    <property type="molecule type" value="Genomic_DNA"/>
</dbReference>
<dbReference type="RefSeq" id="WP_011134814.1">
    <property type="nucleotide sequence ID" value="NC_005085.1"/>
</dbReference>
<dbReference type="SMR" id="Q7NYL4"/>
<dbReference type="STRING" id="243365.CV_1260"/>
<dbReference type="GeneID" id="66366920"/>
<dbReference type="KEGG" id="cvi:CV_1260"/>
<dbReference type="eggNOG" id="COG0120">
    <property type="taxonomic scope" value="Bacteria"/>
</dbReference>
<dbReference type="HOGENOM" id="CLU_056590_1_1_4"/>
<dbReference type="OrthoDB" id="5870696at2"/>
<dbReference type="UniPathway" id="UPA00115">
    <property type="reaction ID" value="UER00412"/>
</dbReference>
<dbReference type="Proteomes" id="UP000001424">
    <property type="component" value="Chromosome"/>
</dbReference>
<dbReference type="GO" id="GO:0005829">
    <property type="term" value="C:cytosol"/>
    <property type="evidence" value="ECO:0007669"/>
    <property type="project" value="TreeGrafter"/>
</dbReference>
<dbReference type="GO" id="GO:0004751">
    <property type="term" value="F:ribose-5-phosphate isomerase activity"/>
    <property type="evidence" value="ECO:0007669"/>
    <property type="project" value="UniProtKB-UniRule"/>
</dbReference>
<dbReference type="GO" id="GO:0006014">
    <property type="term" value="P:D-ribose metabolic process"/>
    <property type="evidence" value="ECO:0007669"/>
    <property type="project" value="TreeGrafter"/>
</dbReference>
<dbReference type="GO" id="GO:0009052">
    <property type="term" value="P:pentose-phosphate shunt, non-oxidative branch"/>
    <property type="evidence" value="ECO:0007669"/>
    <property type="project" value="UniProtKB-UniRule"/>
</dbReference>
<dbReference type="CDD" id="cd01398">
    <property type="entry name" value="RPI_A"/>
    <property type="match status" value="1"/>
</dbReference>
<dbReference type="FunFam" id="3.30.70.260:FF:000004">
    <property type="entry name" value="Ribose-5-phosphate isomerase A"/>
    <property type="match status" value="1"/>
</dbReference>
<dbReference type="FunFam" id="3.40.50.1360:FF:000001">
    <property type="entry name" value="Ribose-5-phosphate isomerase A"/>
    <property type="match status" value="1"/>
</dbReference>
<dbReference type="Gene3D" id="3.30.70.260">
    <property type="match status" value="1"/>
</dbReference>
<dbReference type="Gene3D" id="3.40.50.1360">
    <property type="match status" value="1"/>
</dbReference>
<dbReference type="HAMAP" id="MF_00170">
    <property type="entry name" value="Rib_5P_isom_A"/>
    <property type="match status" value="1"/>
</dbReference>
<dbReference type="InterPro" id="IPR037171">
    <property type="entry name" value="NagB/RpiA_transferase-like"/>
</dbReference>
<dbReference type="InterPro" id="IPR020672">
    <property type="entry name" value="Ribose5P_isomerase_typA_subgr"/>
</dbReference>
<dbReference type="InterPro" id="IPR004788">
    <property type="entry name" value="Ribose5P_isomerase_type_A"/>
</dbReference>
<dbReference type="NCBIfam" id="NF001924">
    <property type="entry name" value="PRK00702.1"/>
    <property type="match status" value="1"/>
</dbReference>
<dbReference type="NCBIfam" id="TIGR00021">
    <property type="entry name" value="rpiA"/>
    <property type="match status" value="1"/>
</dbReference>
<dbReference type="PANTHER" id="PTHR11934">
    <property type="entry name" value="RIBOSE-5-PHOSPHATE ISOMERASE"/>
    <property type="match status" value="1"/>
</dbReference>
<dbReference type="PANTHER" id="PTHR11934:SF0">
    <property type="entry name" value="RIBOSE-5-PHOSPHATE ISOMERASE"/>
    <property type="match status" value="1"/>
</dbReference>
<dbReference type="Pfam" id="PF06026">
    <property type="entry name" value="Rib_5-P_isom_A"/>
    <property type="match status" value="1"/>
</dbReference>
<dbReference type="SUPFAM" id="SSF75445">
    <property type="entry name" value="D-ribose-5-phosphate isomerase (RpiA), lid domain"/>
    <property type="match status" value="1"/>
</dbReference>
<dbReference type="SUPFAM" id="SSF100950">
    <property type="entry name" value="NagB/RpiA/CoA transferase-like"/>
    <property type="match status" value="1"/>
</dbReference>
<evidence type="ECO:0000255" key="1">
    <source>
        <dbReference type="HAMAP-Rule" id="MF_00170"/>
    </source>
</evidence>
<protein>
    <recommendedName>
        <fullName evidence="1">Ribose-5-phosphate isomerase A</fullName>
        <ecNumber evidence="1">5.3.1.6</ecNumber>
    </recommendedName>
    <alternativeName>
        <fullName evidence="1">Phosphoriboisomerase A</fullName>
        <shortName evidence="1">PRI</shortName>
    </alternativeName>
</protein>
<feature type="chain" id="PRO_0000158409" description="Ribose-5-phosphate isomerase A">
    <location>
        <begin position="1"/>
        <end position="219"/>
    </location>
</feature>
<feature type="active site" description="Proton acceptor" evidence="1">
    <location>
        <position position="104"/>
    </location>
</feature>
<feature type="binding site" evidence="1">
    <location>
        <begin position="29"/>
        <end position="32"/>
    </location>
    <ligand>
        <name>substrate</name>
    </ligand>
</feature>
<feature type="binding site" evidence="1">
    <location>
        <begin position="82"/>
        <end position="85"/>
    </location>
    <ligand>
        <name>substrate</name>
    </ligand>
</feature>
<feature type="binding site" evidence="1">
    <location>
        <begin position="95"/>
        <end position="98"/>
    </location>
    <ligand>
        <name>substrate</name>
    </ligand>
</feature>
<feature type="binding site" evidence="1">
    <location>
        <position position="122"/>
    </location>
    <ligand>
        <name>substrate</name>
    </ligand>
</feature>
<proteinExistence type="inferred from homology"/>
<comment type="function">
    <text evidence="1">Catalyzes the reversible conversion of ribose-5-phosphate to ribulose 5-phosphate.</text>
</comment>
<comment type="catalytic activity">
    <reaction evidence="1">
        <text>aldehydo-D-ribose 5-phosphate = D-ribulose 5-phosphate</text>
        <dbReference type="Rhea" id="RHEA:14657"/>
        <dbReference type="ChEBI" id="CHEBI:58121"/>
        <dbReference type="ChEBI" id="CHEBI:58273"/>
        <dbReference type="EC" id="5.3.1.6"/>
    </reaction>
</comment>
<comment type="pathway">
    <text evidence="1">Carbohydrate degradation; pentose phosphate pathway; D-ribose 5-phosphate from D-ribulose 5-phosphate (non-oxidative stage): step 1/1.</text>
</comment>
<comment type="subunit">
    <text evidence="1">Homodimer.</text>
</comment>
<comment type="similarity">
    <text evidence="1">Belongs to the ribose 5-phosphate isomerase family.</text>
</comment>
<accession>Q7NYL4</accession>